<protein>
    <recommendedName>
        <fullName evidence="1">Large ribosomal subunit protein bL21</fullName>
    </recommendedName>
    <alternativeName>
        <fullName evidence="2">50S ribosomal protein L21</fullName>
    </alternativeName>
</protein>
<keyword id="KW-1185">Reference proteome</keyword>
<keyword id="KW-0687">Ribonucleoprotein</keyword>
<keyword id="KW-0689">Ribosomal protein</keyword>
<keyword id="KW-0694">RNA-binding</keyword>
<keyword id="KW-0699">rRNA-binding</keyword>
<organism>
    <name type="scientific">Shewanella baltica (strain OS155 / ATCC BAA-1091)</name>
    <dbReference type="NCBI Taxonomy" id="325240"/>
    <lineage>
        <taxon>Bacteria</taxon>
        <taxon>Pseudomonadati</taxon>
        <taxon>Pseudomonadota</taxon>
        <taxon>Gammaproteobacteria</taxon>
        <taxon>Alteromonadales</taxon>
        <taxon>Shewanellaceae</taxon>
        <taxon>Shewanella</taxon>
    </lineage>
</organism>
<comment type="function">
    <text evidence="1">This protein binds to 23S rRNA in the presence of protein L20.</text>
</comment>
<comment type="subunit">
    <text evidence="1">Part of the 50S ribosomal subunit. Contacts protein L20.</text>
</comment>
<comment type="similarity">
    <text evidence="1">Belongs to the bacterial ribosomal protein bL21 family.</text>
</comment>
<reference key="1">
    <citation type="submission" date="2007-02" db="EMBL/GenBank/DDBJ databases">
        <title>Complete sequence of chromosome of Shewanella baltica OS155.</title>
        <authorList>
            <consortium name="US DOE Joint Genome Institute"/>
            <person name="Copeland A."/>
            <person name="Lucas S."/>
            <person name="Lapidus A."/>
            <person name="Barry K."/>
            <person name="Detter J.C."/>
            <person name="Glavina del Rio T."/>
            <person name="Hammon N."/>
            <person name="Israni S."/>
            <person name="Dalin E."/>
            <person name="Tice H."/>
            <person name="Pitluck S."/>
            <person name="Sims D.R."/>
            <person name="Brettin T."/>
            <person name="Bruce D."/>
            <person name="Han C."/>
            <person name="Tapia R."/>
            <person name="Brainard J."/>
            <person name="Schmutz J."/>
            <person name="Larimer F."/>
            <person name="Land M."/>
            <person name="Hauser L."/>
            <person name="Kyrpides N."/>
            <person name="Mikhailova N."/>
            <person name="Brettar I."/>
            <person name="Klappenbach J."/>
            <person name="Konstantinidis K."/>
            <person name="Rodrigues J."/>
            <person name="Tiedje J."/>
            <person name="Richardson P."/>
        </authorList>
    </citation>
    <scope>NUCLEOTIDE SEQUENCE [LARGE SCALE GENOMIC DNA]</scope>
    <source>
        <strain>OS155 / ATCC BAA-1091</strain>
    </source>
</reference>
<sequence length="103" mass="11410">MYAVFQSGGKQHRVAEGHTVRLEKLEVATGETIEFDQVLLIADGETVHVGAPLVAGGKVVAEVVSHGRGDKVTIVKFRRRKHHDKKMGHRQWFTEVKITAINA</sequence>
<proteinExistence type="inferred from homology"/>
<gene>
    <name evidence="1" type="primary">rplU</name>
    <name type="ordered locus">Sbal_0967</name>
</gene>
<name>RL21_SHEB5</name>
<dbReference type="EMBL" id="CP000563">
    <property type="protein sequence ID" value="ABN60491.1"/>
    <property type="molecule type" value="Genomic_DNA"/>
</dbReference>
<dbReference type="RefSeq" id="WP_006080526.1">
    <property type="nucleotide sequence ID" value="NC_009052.1"/>
</dbReference>
<dbReference type="SMR" id="A3D178"/>
<dbReference type="STRING" id="325240.Sbal_0967"/>
<dbReference type="GeneID" id="11774616"/>
<dbReference type="KEGG" id="sbl:Sbal_0967"/>
<dbReference type="HOGENOM" id="CLU_061463_3_3_6"/>
<dbReference type="OrthoDB" id="9813334at2"/>
<dbReference type="Proteomes" id="UP000001557">
    <property type="component" value="Chromosome"/>
</dbReference>
<dbReference type="GO" id="GO:0005737">
    <property type="term" value="C:cytoplasm"/>
    <property type="evidence" value="ECO:0007669"/>
    <property type="project" value="UniProtKB-ARBA"/>
</dbReference>
<dbReference type="GO" id="GO:1990904">
    <property type="term" value="C:ribonucleoprotein complex"/>
    <property type="evidence" value="ECO:0007669"/>
    <property type="project" value="UniProtKB-KW"/>
</dbReference>
<dbReference type="GO" id="GO:0005840">
    <property type="term" value="C:ribosome"/>
    <property type="evidence" value="ECO:0007669"/>
    <property type="project" value="UniProtKB-KW"/>
</dbReference>
<dbReference type="GO" id="GO:0019843">
    <property type="term" value="F:rRNA binding"/>
    <property type="evidence" value="ECO:0007669"/>
    <property type="project" value="UniProtKB-UniRule"/>
</dbReference>
<dbReference type="GO" id="GO:0003735">
    <property type="term" value="F:structural constituent of ribosome"/>
    <property type="evidence" value="ECO:0007669"/>
    <property type="project" value="InterPro"/>
</dbReference>
<dbReference type="GO" id="GO:0006412">
    <property type="term" value="P:translation"/>
    <property type="evidence" value="ECO:0007669"/>
    <property type="project" value="UniProtKB-UniRule"/>
</dbReference>
<dbReference type="HAMAP" id="MF_01363">
    <property type="entry name" value="Ribosomal_bL21"/>
    <property type="match status" value="1"/>
</dbReference>
<dbReference type="InterPro" id="IPR028909">
    <property type="entry name" value="bL21-like"/>
</dbReference>
<dbReference type="InterPro" id="IPR036164">
    <property type="entry name" value="bL21-like_sf"/>
</dbReference>
<dbReference type="InterPro" id="IPR001787">
    <property type="entry name" value="Ribosomal_bL21"/>
</dbReference>
<dbReference type="InterPro" id="IPR018258">
    <property type="entry name" value="Ribosomal_bL21_CS"/>
</dbReference>
<dbReference type="NCBIfam" id="TIGR00061">
    <property type="entry name" value="L21"/>
    <property type="match status" value="1"/>
</dbReference>
<dbReference type="PANTHER" id="PTHR21349">
    <property type="entry name" value="50S RIBOSOMAL PROTEIN L21"/>
    <property type="match status" value="1"/>
</dbReference>
<dbReference type="PANTHER" id="PTHR21349:SF0">
    <property type="entry name" value="LARGE RIBOSOMAL SUBUNIT PROTEIN BL21M"/>
    <property type="match status" value="1"/>
</dbReference>
<dbReference type="Pfam" id="PF00829">
    <property type="entry name" value="Ribosomal_L21p"/>
    <property type="match status" value="1"/>
</dbReference>
<dbReference type="SUPFAM" id="SSF141091">
    <property type="entry name" value="L21p-like"/>
    <property type="match status" value="1"/>
</dbReference>
<dbReference type="PROSITE" id="PS01169">
    <property type="entry name" value="RIBOSOMAL_L21"/>
    <property type="match status" value="1"/>
</dbReference>
<evidence type="ECO:0000255" key="1">
    <source>
        <dbReference type="HAMAP-Rule" id="MF_01363"/>
    </source>
</evidence>
<evidence type="ECO:0000305" key="2"/>
<accession>A3D178</accession>
<feature type="chain" id="PRO_1000067894" description="Large ribosomal subunit protein bL21">
    <location>
        <begin position="1"/>
        <end position="103"/>
    </location>
</feature>